<evidence type="ECO:0000250" key="1"/>
<evidence type="ECO:0000256" key="2">
    <source>
        <dbReference type="SAM" id="MobiDB-lite"/>
    </source>
</evidence>
<evidence type="ECO:0000305" key="3"/>
<keyword id="KW-0489">Methyltransferase</keyword>
<keyword id="KW-1185">Reference proteome</keyword>
<keyword id="KW-0949">S-adenosyl-L-methionine</keyword>
<keyword id="KW-0808">Transferase</keyword>
<gene>
    <name type="ORF">OsI_13745</name>
</gene>
<reference key="1">
    <citation type="journal article" date="2005" name="PLoS Biol.">
        <title>The genomes of Oryza sativa: a history of duplications.</title>
        <authorList>
            <person name="Yu J."/>
            <person name="Wang J."/>
            <person name="Lin W."/>
            <person name="Li S."/>
            <person name="Li H."/>
            <person name="Zhou J."/>
            <person name="Ni P."/>
            <person name="Dong W."/>
            <person name="Hu S."/>
            <person name="Zeng C."/>
            <person name="Zhang J."/>
            <person name="Zhang Y."/>
            <person name="Li R."/>
            <person name="Xu Z."/>
            <person name="Li S."/>
            <person name="Li X."/>
            <person name="Zheng H."/>
            <person name="Cong L."/>
            <person name="Lin L."/>
            <person name="Yin J."/>
            <person name="Geng J."/>
            <person name="Li G."/>
            <person name="Shi J."/>
            <person name="Liu J."/>
            <person name="Lv H."/>
            <person name="Li J."/>
            <person name="Wang J."/>
            <person name="Deng Y."/>
            <person name="Ran L."/>
            <person name="Shi X."/>
            <person name="Wang X."/>
            <person name="Wu Q."/>
            <person name="Li C."/>
            <person name="Ren X."/>
            <person name="Wang J."/>
            <person name="Wang X."/>
            <person name="Li D."/>
            <person name="Liu D."/>
            <person name="Zhang X."/>
            <person name="Ji Z."/>
            <person name="Zhao W."/>
            <person name="Sun Y."/>
            <person name="Zhang Z."/>
            <person name="Bao J."/>
            <person name="Han Y."/>
            <person name="Dong L."/>
            <person name="Ji J."/>
            <person name="Chen P."/>
            <person name="Wu S."/>
            <person name="Liu J."/>
            <person name="Xiao Y."/>
            <person name="Bu D."/>
            <person name="Tan J."/>
            <person name="Yang L."/>
            <person name="Ye C."/>
            <person name="Zhang J."/>
            <person name="Xu J."/>
            <person name="Zhou Y."/>
            <person name="Yu Y."/>
            <person name="Zhang B."/>
            <person name="Zhuang S."/>
            <person name="Wei H."/>
            <person name="Liu B."/>
            <person name="Lei M."/>
            <person name="Yu H."/>
            <person name="Li Y."/>
            <person name="Xu H."/>
            <person name="Wei S."/>
            <person name="He X."/>
            <person name="Fang L."/>
            <person name="Zhang Z."/>
            <person name="Zhang Y."/>
            <person name="Huang X."/>
            <person name="Su Z."/>
            <person name="Tong W."/>
            <person name="Li J."/>
            <person name="Tong Z."/>
            <person name="Li S."/>
            <person name="Ye J."/>
            <person name="Wang L."/>
            <person name="Fang L."/>
            <person name="Lei T."/>
            <person name="Chen C.-S."/>
            <person name="Chen H.-C."/>
            <person name="Xu Z."/>
            <person name="Li H."/>
            <person name="Huang H."/>
            <person name="Zhang F."/>
            <person name="Xu H."/>
            <person name="Li N."/>
            <person name="Zhao C."/>
            <person name="Li S."/>
            <person name="Dong L."/>
            <person name="Huang Y."/>
            <person name="Li L."/>
            <person name="Xi Y."/>
            <person name="Qi Q."/>
            <person name="Li W."/>
            <person name="Zhang B."/>
            <person name="Hu W."/>
            <person name="Zhang Y."/>
            <person name="Tian X."/>
            <person name="Jiao Y."/>
            <person name="Liang X."/>
            <person name="Jin J."/>
            <person name="Gao L."/>
            <person name="Zheng W."/>
            <person name="Hao B."/>
            <person name="Liu S.-M."/>
            <person name="Wang W."/>
            <person name="Yuan L."/>
            <person name="Cao M."/>
            <person name="McDermott J."/>
            <person name="Samudrala R."/>
            <person name="Wang J."/>
            <person name="Wong G.K.-S."/>
            <person name="Yang H."/>
        </authorList>
    </citation>
    <scope>NUCLEOTIDE SEQUENCE [LARGE SCALE GENOMIC DNA]</scope>
    <source>
        <strain>cv. 93-11</strain>
    </source>
</reference>
<organism>
    <name type="scientific">Oryza sativa subsp. indica</name>
    <name type="common">Rice</name>
    <dbReference type="NCBI Taxonomy" id="39946"/>
    <lineage>
        <taxon>Eukaryota</taxon>
        <taxon>Viridiplantae</taxon>
        <taxon>Streptophyta</taxon>
        <taxon>Embryophyta</taxon>
        <taxon>Tracheophyta</taxon>
        <taxon>Spermatophyta</taxon>
        <taxon>Magnoliopsida</taxon>
        <taxon>Liliopsida</taxon>
        <taxon>Poales</taxon>
        <taxon>Poaceae</taxon>
        <taxon>BOP clade</taxon>
        <taxon>Oryzoideae</taxon>
        <taxon>Oryzeae</taxon>
        <taxon>Oryzinae</taxon>
        <taxon>Oryza</taxon>
        <taxon>Oryza sativa</taxon>
    </lineage>
</organism>
<protein>
    <recommendedName>
        <fullName>Alpha N-terminal protein methyltransferase 1</fullName>
        <ecNumber>2.1.1.244</ecNumber>
    </recommendedName>
    <alternativeName>
        <fullName>X-Pro-Lys N-terminal protein methyltransferase 1</fullName>
        <shortName>NTM1</shortName>
    </alternativeName>
</protein>
<accession>A2XMJ1</accession>
<proteinExistence type="inferred from homology"/>
<dbReference type="EC" id="2.1.1.244"/>
<dbReference type="EMBL" id="CM000128">
    <property type="protein sequence ID" value="EAY92051.1"/>
    <property type="molecule type" value="Genomic_DNA"/>
</dbReference>
<dbReference type="SMR" id="A2XMJ1"/>
<dbReference type="EnsemblPlants" id="BGIOSGA009716-TA">
    <property type="protein sequence ID" value="BGIOSGA009716-PA"/>
    <property type="gene ID" value="BGIOSGA009716"/>
</dbReference>
<dbReference type="Gramene" id="BGIOSGA009716-TA">
    <property type="protein sequence ID" value="BGIOSGA009716-PA"/>
    <property type="gene ID" value="BGIOSGA009716"/>
</dbReference>
<dbReference type="HOGENOM" id="CLU_055356_1_0_1"/>
<dbReference type="OMA" id="PVRMYCL"/>
<dbReference type="Proteomes" id="UP000007015">
    <property type="component" value="Chromosome 3"/>
</dbReference>
<dbReference type="GO" id="GO:0005737">
    <property type="term" value="C:cytoplasm"/>
    <property type="evidence" value="ECO:0007669"/>
    <property type="project" value="TreeGrafter"/>
</dbReference>
<dbReference type="GO" id="GO:0071885">
    <property type="term" value="F:N-terminal protein N-methyltransferase activity"/>
    <property type="evidence" value="ECO:0007669"/>
    <property type="project" value="UniProtKB-EC"/>
</dbReference>
<dbReference type="GO" id="GO:0032259">
    <property type="term" value="P:methylation"/>
    <property type="evidence" value="ECO:0007669"/>
    <property type="project" value="UniProtKB-KW"/>
</dbReference>
<dbReference type="CDD" id="cd02440">
    <property type="entry name" value="AdoMet_MTases"/>
    <property type="match status" value="1"/>
</dbReference>
<dbReference type="FunFam" id="3.40.50.150:FF:000025">
    <property type="entry name" value="N-terminal Xaa-Pro-Lys N-methyltransferase 1"/>
    <property type="match status" value="1"/>
</dbReference>
<dbReference type="Gene3D" id="3.40.50.150">
    <property type="entry name" value="Vaccinia Virus protein VP39"/>
    <property type="match status" value="1"/>
</dbReference>
<dbReference type="InterPro" id="IPR008576">
    <property type="entry name" value="MeTrfase_NTM1"/>
</dbReference>
<dbReference type="InterPro" id="IPR029063">
    <property type="entry name" value="SAM-dependent_MTases_sf"/>
</dbReference>
<dbReference type="PANTHER" id="PTHR12753">
    <property type="entry name" value="AD-003 - RELATED"/>
    <property type="match status" value="1"/>
</dbReference>
<dbReference type="PANTHER" id="PTHR12753:SF0">
    <property type="entry name" value="ALPHA N-TERMINAL PROTEIN METHYLTRANSFERASE 1"/>
    <property type="match status" value="1"/>
</dbReference>
<dbReference type="Pfam" id="PF05891">
    <property type="entry name" value="Methyltransf_PK"/>
    <property type="match status" value="1"/>
</dbReference>
<dbReference type="PIRSF" id="PIRSF016958">
    <property type="entry name" value="DUF858_MeTrfase_lik"/>
    <property type="match status" value="1"/>
</dbReference>
<dbReference type="SUPFAM" id="SSF53335">
    <property type="entry name" value="S-adenosyl-L-methionine-dependent methyltransferases"/>
    <property type="match status" value="1"/>
</dbReference>
<name>NTM1_ORYSI</name>
<comment type="function">
    <text evidence="1">Alpha-N-methyltransferase that methylates the N-terminus of target proteins containing the N-terminal motif [Ala/Pro/Ser]-Pro-Lys when the initiator Met is cleaved. Specifically catalyzes mono-, di- or tri-methylation of exposed alpha-amino group of Ala or Ser residue in the [Ala/Ser]-Pro-Lys motif and mono- or di-methylation of Pro in the Pro-Pro-Lys motif (By similarity).</text>
</comment>
<comment type="catalytic activity">
    <reaction>
        <text>N-terminal L-alanyl-L-prolyl-L-lysyl-[protein] + 3 S-adenosyl-L-methionine = N-terminal N,N,N-trimethyl-L-alanyl-L-prolyl-L-lysyl-[protein] + 3 S-adenosyl-L-homocysteine + 3 H(+)</text>
        <dbReference type="Rhea" id="RHEA:54712"/>
        <dbReference type="Rhea" id="RHEA-COMP:13785"/>
        <dbReference type="Rhea" id="RHEA-COMP:13971"/>
        <dbReference type="ChEBI" id="CHEBI:15378"/>
        <dbReference type="ChEBI" id="CHEBI:57856"/>
        <dbReference type="ChEBI" id="CHEBI:59789"/>
        <dbReference type="ChEBI" id="CHEBI:138057"/>
        <dbReference type="ChEBI" id="CHEBI:138315"/>
        <dbReference type="EC" id="2.1.1.244"/>
    </reaction>
</comment>
<comment type="catalytic activity">
    <reaction>
        <text>N-terminal L-seryl-L-prolyl-L-lysyl-[protein] + 3 S-adenosyl-L-methionine = N-terminal N,N,N-trimethyl-L-seryl-L-prolyl-L-lysyl-[protein] + 3 S-adenosyl-L-homocysteine + 3 H(+)</text>
        <dbReference type="Rhea" id="RHEA:54724"/>
        <dbReference type="Rhea" id="RHEA-COMP:13789"/>
        <dbReference type="Rhea" id="RHEA-COMP:13973"/>
        <dbReference type="ChEBI" id="CHEBI:15378"/>
        <dbReference type="ChEBI" id="CHEBI:57856"/>
        <dbReference type="ChEBI" id="CHEBI:59789"/>
        <dbReference type="ChEBI" id="CHEBI:138061"/>
        <dbReference type="ChEBI" id="CHEBI:138317"/>
        <dbReference type="EC" id="2.1.1.244"/>
    </reaction>
</comment>
<comment type="catalytic activity">
    <reaction>
        <text>N-terminal L-prolyl-L-prolyl-L-lysyl-[protein] + 2 S-adenosyl-L-methionine = N-terminal N,N-dimethyl-L-prolyl-L-prolyl-L-lysyl-[protein] + 2 S-adenosyl-L-homocysteine + 2 H(+)</text>
        <dbReference type="Rhea" id="RHEA:54736"/>
        <dbReference type="Rhea" id="RHEA-COMP:13787"/>
        <dbReference type="Rhea" id="RHEA-COMP:13974"/>
        <dbReference type="ChEBI" id="CHEBI:15378"/>
        <dbReference type="ChEBI" id="CHEBI:57856"/>
        <dbReference type="ChEBI" id="CHEBI:59789"/>
        <dbReference type="ChEBI" id="CHEBI:138059"/>
        <dbReference type="ChEBI" id="CHEBI:138318"/>
        <dbReference type="EC" id="2.1.1.244"/>
    </reaction>
</comment>
<comment type="similarity">
    <text evidence="3">Belongs to the methyltransferase superfamily. NTM1 family.</text>
</comment>
<feature type="chain" id="PRO_0000399787" description="Alpha N-terminal protein methyltransferase 1">
    <location>
        <begin position="1"/>
        <end position="307"/>
    </location>
</feature>
<feature type="region of interest" description="Disordered" evidence="2">
    <location>
        <begin position="38"/>
        <end position="60"/>
    </location>
</feature>
<feature type="compositionally biased region" description="Low complexity" evidence="2">
    <location>
        <begin position="38"/>
        <end position="54"/>
    </location>
</feature>
<feature type="binding site" evidence="1">
    <location>
        <position position="123"/>
    </location>
    <ligand>
        <name>S-adenosyl-L-methionine</name>
        <dbReference type="ChEBI" id="CHEBI:59789"/>
    </ligand>
</feature>
<feature type="binding site" evidence="1">
    <location>
        <position position="128"/>
    </location>
    <ligand>
        <name>S-adenosyl-L-methionine</name>
        <dbReference type="ChEBI" id="CHEBI:59789"/>
    </ligand>
</feature>
<feature type="binding site" evidence="1">
    <location>
        <begin position="145"/>
        <end position="147"/>
    </location>
    <ligand>
        <name>S-adenosyl-L-methionine</name>
        <dbReference type="ChEBI" id="CHEBI:59789"/>
    </ligand>
</feature>
<feature type="binding site" evidence="1">
    <location>
        <begin position="179"/>
        <end position="180"/>
    </location>
    <ligand>
        <name>S-adenosyl-L-methionine</name>
        <dbReference type="ChEBI" id="CHEBI:59789"/>
    </ligand>
</feature>
<feature type="binding site" evidence="1">
    <location>
        <position position="195"/>
    </location>
    <ligand>
        <name>S-adenosyl-L-methionine</name>
        <dbReference type="ChEBI" id="CHEBI:59789"/>
    </ligand>
</feature>
<sequence>MDSRGFDSEGREFSSATEMWAHEIGAAADAPVSAAVAEPAPAPAAGSNGVAGEQEAGGGGKREEWYSKAIAYWQGVEASTEGVLGGYGCVNDVDVKGSDAFLRPLLAERFGAARRHLVALDCGSGIGRVTKNFLLRHFNEVDLVEPVSHFLEAAQENLTECMEVGEDTHKAANFYCVPLQDFTPDEGRYDVIWIQWCIGQLPDDDFISFFNRAKIGLKPNGFFVLKENIARNGFVLDKEDNSITRSDAYFKELFKKCGLYIHSIKDQSDLPKELFAVKMYALVTEKPKIQKNGKRRRPKNSPRMIRS</sequence>